<feature type="chain" id="PRO_0000238144" description="Small ribosomal subunit protein uS12">
    <location>
        <begin position="1"/>
        <end position="137"/>
    </location>
</feature>
<feature type="region of interest" description="Disordered" evidence="3">
    <location>
        <begin position="1"/>
        <end position="55"/>
    </location>
</feature>
<feature type="region of interest" description="Disordered" evidence="3">
    <location>
        <begin position="118"/>
        <end position="137"/>
    </location>
</feature>
<feature type="modified residue" description="3-methylthioaspartic acid" evidence="1">
    <location>
        <position position="102"/>
    </location>
</feature>
<proteinExistence type="inferred from homology"/>
<keyword id="KW-0488">Methylation</keyword>
<keyword id="KW-0687">Ribonucleoprotein</keyword>
<keyword id="KW-0689">Ribosomal protein</keyword>
<keyword id="KW-0694">RNA-binding</keyword>
<keyword id="KW-0699">rRNA-binding</keyword>
<keyword id="KW-0820">tRNA-binding</keyword>
<comment type="function">
    <text evidence="2">With S4 and S5 plays an important role in translational accuracy.</text>
</comment>
<comment type="function">
    <text evidence="2">Interacts with and stabilizes bases of the 16S rRNA that are involved in tRNA selection in the A site and with the mRNA backbone. Located at the interface of the 30S and 50S subunits, it traverses the body of the 30S subunit contacting proteins on the other side and probably holding the rRNA structure together. The combined cluster of proteins S8, S12 and S17 appears to hold together the shoulder and platform of the 30S subunit.</text>
</comment>
<comment type="subunit">
    <text evidence="2">Part of the 30S ribosomal subunit. Contacts proteins S8 and S17. May interact with IF1 in the 30S initiation complex.</text>
</comment>
<comment type="similarity">
    <text evidence="2">Belongs to the universal ribosomal protein uS12 family.</text>
</comment>
<name>RS12_STAAB</name>
<evidence type="ECO:0000250" key="1"/>
<evidence type="ECO:0000255" key="2">
    <source>
        <dbReference type="HAMAP-Rule" id="MF_00403"/>
    </source>
</evidence>
<evidence type="ECO:0000256" key="3">
    <source>
        <dbReference type="SAM" id="MobiDB-lite"/>
    </source>
</evidence>
<evidence type="ECO:0000305" key="4"/>
<gene>
    <name evidence="2" type="primary">rpsL</name>
    <name type="ordered locus">SAB0496</name>
</gene>
<accession>Q2YSB6</accession>
<reference key="1">
    <citation type="journal article" date="2007" name="PLoS ONE">
        <title>Molecular correlates of host specialization in Staphylococcus aureus.</title>
        <authorList>
            <person name="Herron-Olson L."/>
            <person name="Fitzgerald J.R."/>
            <person name="Musser J.M."/>
            <person name="Kapur V."/>
        </authorList>
    </citation>
    <scope>NUCLEOTIDE SEQUENCE [LARGE SCALE GENOMIC DNA]</scope>
    <source>
        <strain>bovine RF122 / ET3-1</strain>
    </source>
</reference>
<protein>
    <recommendedName>
        <fullName evidence="2">Small ribosomal subunit protein uS12</fullName>
    </recommendedName>
    <alternativeName>
        <fullName evidence="4">30S ribosomal protein S12</fullName>
    </alternativeName>
</protein>
<sequence>MPTINQLVRKPRQSKIKKSDSPALNKGFNSKKKKFTDLNSPQKRGVCTRVGTMTPKKPNSALRKYARVRLSNNIEINAYIPGIGHNLQEHSVVLVRGGRVKDLPGVRYHIVRGALDTSGVDGRRQGRSLYGTKKPKN</sequence>
<dbReference type="EMBL" id="AJ938182">
    <property type="protein sequence ID" value="CAI80184.1"/>
    <property type="molecule type" value="Genomic_DNA"/>
</dbReference>
<dbReference type="RefSeq" id="WP_001142337.1">
    <property type="nucleotide sequence ID" value="NC_007622.1"/>
</dbReference>
<dbReference type="SMR" id="Q2YSB6"/>
<dbReference type="GeneID" id="98344879"/>
<dbReference type="KEGG" id="sab:SAB0496"/>
<dbReference type="HOGENOM" id="CLU_104295_1_2_9"/>
<dbReference type="GO" id="GO:0015935">
    <property type="term" value="C:small ribosomal subunit"/>
    <property type="evidence" value="ECO:0007669"/>
    <property type="project" value="InterPro"/>
</dbReference>
<dbReference type="GO" id="GO:0019843">
    <property type="term" value="F:rRNA binding"/>
    <property type="evidence" value="ECO:0007669"/>
    <property type="project" value="UniProtKB-UniRule"/>
</dbReference>
<dbReference type="GO" id="GO:0003735">
    <property type="term" value="F:structural constituent of ribosome"/>
    <property type="evidence" value="ECO:0007669"/>
    <property type="project" value="InterPro"/>
</dbReference>
<dbReference type="GO" id="GO:0000049">
    <property type="term" value="F:tRNA binding"/>
    <property type="evidence" value="ECO:0007669"/>
    <property type="project" value="UniProtKB-UniRule"/>
</dbReference>
<dbReference type="GO" id="GO:0006412">
    <property type="term" value="P:translation"/>
    <property type="evidence" value="ECO:0007669"/>
    <property type="project" value="UniProtKB-UniRule"/>
</dbReference>
<dbReference type="CDD" id="cd03368">
    <property type="entry name" value="Ribosomal_S12"/>
    <property type="match status" value="1"/>
</dbReference>
<dbReference type="FunFam" id="2.40.50.140:FF:000001">
    <property type="entry name" value="30S ribosomal protein S12"/>
    <property type="match status" value="1"/>
</dbReference>
<dbReference type="Gene3D" id="2.40.50.140">
    <property type="entry name" value="Nucleic acid-binding proteins"/>
    <property type="match status" value="1"/>
</dbReference>
<dbReference type="HAMAP" id="MF_00403_B">
    <property type="entry name" value="Ribosomal_uS12_B"/>
    <property type="match status" value="1"/>
</dbReference>
<dbReference type="InterPro" id="IPR012340">
    <property type="entry name" value="NA-bd_OB-fold"/>
</dbReference>
<dbReference type="InterPro" id="IPR006032">
    <property type="entry name" value="Ribosomal_uS12"/>
</dbReference>
<dbReference type="InterPro" id="IPR005679">
    <property type="entry name" value="Ribosomal_uS12_bac"/>
</dbReference>
<dbReference type="NCBIfam" id="TIGR00981">
    <property type="entry name" value="rpsL_bact"/>
    <property type="match status" value="1"/>
</dbReference>
<dbReference type="PANTHER" id="PTHR11652">
    <property type="entry name" value="30S RIBOSOMAL PROTEIN S12 FAMILY MEMBER"/>
    <property type="match status" value="1"/>
</dbReference>
<dbReference type="Pfam" id="PF00164">
    <property type="entry name" value="Ribosom_S12_S23"/>
    <property type="match status" value="1"/>
</dbReference>
<dbReference type="PIRSF" id="PIRSF002133">
    <property type="entry name" value="Ribosomal_S12/S23"/>
    <property type="match status" value="1"/>
</dbReference>
<dbReference type="PRINTS" id="PR01034">
    <property type="entry name" value="RIBOSOMALS12"/>
</dbReference>
<dbReference type="SUPFAM" id="SSF50249">
    <property type="entry name" value="Nucleic acid-binding proteins"/>
    <property type="match status" value="1"/>
</dbReference>
<dbReference type="PROSITE" id="PS00055">
    <property type="entry name" value="RIBOSOMAL_S12"/>
    <property type="match status" value="1"/>
</dbReference>
<organism>
    <name type="scientific">Staphylococcus aureus (strain bovine RF122 / ET3-1)</name>
    <dbReference type="NCBI Taxonomy" id="273036"/>
    <lineage>
        <taxon>Bacteria</taxon>
        <taxon>Bacillati</taxon>
        <taxon>Bacillota</taxon>
        <taxon>Bacilli</taxon>
        <taxon>Bacillales</taxon>
        <taxon>Staphylococcaceae</taxon>
        <taxon>Staphylococcus</taxon>
    </lineage>
</organism>